<sequence>MAGIVLKYKIPQFQEYTIHVQKYNNVTNSSELRSKLAELPFAYIDSKTVISVEQLSSAIYKAILETEYNRMRTRTIHSECILSLSPSSNIGDALNRFGIKEGTTDIIVIKIIEDSNEEPYDGNASVDGDLVPVSDDEFSTSADKEIIKTVCIPCDKL</sequence>
<gene>
    <name type="primary">CGI121</name>
    <name type="ordered locus">KLLA0C14894g</name>
</gene>
<proteinExistence type="inferred from homology"/>
<organism>
    <name type="scientific">Kluyveromyces lactis (strain ATCC 8585 / CBS 2359 / DSM 70799 / NBRC 1267 / NRRL Y-1140 / WM37)</name>
    <name type="common">Yeast</name>
    <name type="synonym">Candida sphaerica</name>
    <dbReference type="NCBI Taxonomy" id="284590"/>
    <lineage>
        <taxon>Eukaryota</taxon>
        <taxon>Fungi</taxon>
        <taxon>Dikarya</taxon>
        <taxon>Ascomycota</taxon>
        <taxon>Saccharomycotina</taxon>
        <taxon>Saccharomycetes</taxon>
        <taxon>Saccharomycetales</taxon>
        <taxon>Saccharomycetaceae</taxon>
        <taxon>Kluyveromyces</taxon>
    </lineage>
</organism>
<comment type="function">
    <text evidence="1">Component of the EKC/KEOPS complex that is required for the formation of a threonylcarbamoyl group on adenosine at position 37 (t(6)A37) in tRNAs that read codons beginning with adenine. The complex is probably involved in the transfer of the threonylcarbamoyl moiety of threonylcarbamoyl-AMP (TC-AMP) to the N6 group of A37. CGI121 acts as an allosteric effector that regulates the t(6)A activity of the complex. The EKC/KEOPS complex also promotes both telomere uncapping and telomere elongation. The complex is required for efficient recruitment of transcriptional coactivators. CGI121 is not required for tRNA modification (By similarity).</text>
</comment>
<comment type="subunit">
    <text evidence="1">Component of the EKC/KEOPS complex composed of at least BUD32, CGI121, GON7, KAE1 and PCC1; the whole complex dimerizes.</text>
</comment>
<comment type="subcellular location">
    <subcellularLocation>
        <location evidence="1">Nucleus</location>
    </subcellularLocation>
    <subcellularLocation>
        <location evidence="1">Chromosome</location>
        <location evidence="1">Telomere</location>
    </subcellularLocation>
</comment>
<comment type="similarity">
    <text evidence="2">Belongs to the CGI121/TPRKB family.</text>
</comment>
<feature type="chain" id="PRO_0000279214" description="EKC/KEOPS complex subunit CGI121">
    <location>
        <begin position="1"/>
        <end position="157"/>
    </location>
</feature>
<dbReference type="EMBL" id="CR382123">
    <property type="protein sequence ID" value="CAH01718.1"/>
    <property type="molecule type" value="Genomic_DNA"/>
</dbReference>
<dbReference type="RefSeq" id="XP_452867.1">
    <property type="nucleotide sequence ID" value="XM_452867.1"/>
</dbReference>
<dbReference type="SMR" id="Q6CT72"/>
<dbReference type="FunCoup" id="Q6CT72">
    <property type="interactions" value="526"/>
</dbReference>
<dbReference type="STRING" id="284590.Q6CT72"/>
<dbReference type="PaxDb" id="284590-Q6CT72"/>
<dbReference type="KEGG" id="kla:KLLA0_C14894g"/>
<dbReference type="eggNOG" id="KOG4066">
    <property type="taxonomic scope" value="Eukaryota"/>
</dbReference>
<dbReference type="HOGENOM" id="CLU_065847_1_1_1"/>
<dbReference type="InParanoid" id="Q6CT72"/>
<dbReference type="OMA" id="IVCRMST"/>
<dbReference type="Proteomes" id="UP000000598">
    <property type="component" value="Chromosome C"/>
</dbReference>
<dbReference type="GO" id="GO:0000781">
    <property type="term" value="C:chromosome, telomeric region"/>
    <property type="evidence" value="ECO:0007669"/>
    <property type="project" value="UniProtKB-SubCell"/>
</dbReference>
<dbReference type="GO" id="GO:0005829">
    <property type="term" value="C:cytosol"/>
    <property type="evidence" value="ECO:0007669"/>
    <property type="project" value="TreeGrafter"/>
</dbReference>
<dbReference type="GO" id="GO:0000408">
    <property type="term" value="C:EKC/KEOPS complex"/>
    <property type="evidence" value="ECO:0007669"/>
    <property type="project" value="TreeGrafter"/>
</dbReference>
<dbReference type="GO" id="GO:0005634">
    <property type="term" value="C:nucleus"/>
    <property type="evidence" value="ECO:0007669"/>
    <property type="project" value="UniProtKB-SubCell"/>
</dbReference>
<dbReference type="GO" id="GO:0002949">
    <property type="term" value="P:tRNA threonylcarbamoyladenosine modification"/>
    <property type="evidence" value="ECO:0007669"/>
    <property type="project" value="TreeGrafter"/>
</dbReference>
<dbReference type="Gene3D" id="3.30.2380.10">
    <property type="entry name" value="CGI121/TPRKB"/>
    <property type="match status" value="1"/>
</dbReference>
<dbReference type="InterPro" id="IPR013926">
    <property type="entry name" value="CGI121/TPRKB"/>
</dbReference>
<dbReference type="InterPro" id="IPR036504">
    <property type="entry name" value="CGI121/TPRKB_sf"/>
</dbReference>
<dbReference type="PANTHER" id="PTHR15840">
    <property type="entry name" value="CGI-121 FAMILY MEMBER"/>
    <property type="match status" value="1"/>
</dbReference>
<dbReference type="PANTHER" id="PTHR15840:SF10">
    <property type="entry name" value="EKC_KEOPS COMPLEX SUBUNIT TPRKB"/>
    <property type="match status" value="1"/>
</dbReference>
<dbReference type="Pfam" id="PF08617">
    <property type="entry name" value="CGI-121"/>
    <property type="match status" value="1"/>
</dbReference>
<dbReference type="SUPFAM" id="SSF143870">
    <property type="entry name" value="PF0523-like"/>
    <property type="match status" value="1"/>
</dbReference>
<keyword id="KW-0010">Activator</keyword>
<keyword id="KW-0158">Chromosome</keyword>
<keyword id="KW-0539">Nucleus</keyword>
<keyword id="KW-1185">Reference proteome</keyword>
<keyword id="KW-0779">Telomere</keyword>
<keyword id="KW-0804">Transcription</keyword>
<keyword id="KW-0805">Transcription regulation</keyword>
<keyword id="KW-0819">tRNA processing</keyword>
<protein>
    <recommendedName>
        <fullName>EKC/KEOPS complex subunit CGI121</fullName>
    </recommendedName>
</protein>
<reference key="1">
    <citation type="journal article" date="2004" name="Nature">
        <title>Genome evolution in yeasts.</title>
        <authorList>
            <person name="Dujon B."/>
            <person name="Sherman D."/>
            <person name="Fischer G."/>
            <person name="Durrens P."/>
            <person name="Casaregola S."/>
            <person name="Lafontaine I."/>
            <person name="de Montigny J."/>
            <person name="Marck C."/>
            <person name="Neuveglise C."/>
            <person name="Talla E."/>
            <person name="Goffard N."/>
            <person name="Frangeul L."/>
            <person name="Aigle M."/>
            <person name="Anthouard V."/>
            <person name="Babour A."/>
            <person name="Barbe V."/>
            <person name="Barnay S."/>
            <person name="Blanchin S."/>
            <person name="Beckerich J.-M."/>
            <person name="Beyne E."/>
            <person name="Bleykasten C."/>
            <person name="Boisrame A."/>
            <person name="Boyer J."/>
            <person name="Cattolico L."/>
            <person name="Confanioleri F."/>
            <person name="de Daruvar A."/>
            <person name="Despons L."/>
            <person name="Fabre E."/>
            <person name="Fairhead C."/>
            <person name="Ferry-Dumazet H."/>
            <person name="Groppi A."/>
            <person name="Hantraye F."/>
            <person name="Hennequin C."/>
            <person name="Jauniaux N."/>
            <person name="Joyet P."/>
            <person name="Kachouri R."/>
            <person name="Kerrest A."/>
            <person name="Koszul R."/>
            <person name="Lemaire M."/>
            <person name="Lesur I."/>
            <person name="Ma L."/>
            <person name="Muller H."/>
            <person name="Nicaud J.-M."/>
            <person name="Nikolski M."/>
            <person name="Oztas S."/>
            <person name="Ozier-Kalogeropoulos O."/>
            <person name="Pellenz S."/>
            <person name="Potier S."/>
            <person name="Richard G.-F."/>
            <person name="Straub M.-L."/>
            <person name="Suleau A."/>
            <person name="Swennen D."/>
            <person name="Tekaia F."/>
            <person name="Wesolowski-Louvel M."/>
            <person name="Westhof E."/>
            <person name="Wirth B."/>
            <person name="Zeniou-Meyer M."/>
            <person name="Zivanovic Y."/>
            <person name="Bolotin-Fukuhara M."/>
            <person name="Thierry A."/>
            <person name="Bouchier C."/>
            <person name="Caudron B."/>
            <person name="Scarpelli C."/>
            <person name="Gaillardin C."/>
            <person name="Weissenbach J."/>
            <person name="Wincker P."/>
            <person name="Souciet J.-L."/>
        </authorList>
    </citation>
    <scope>NUCLEOTIDE SEQUENCE [LARGE SCALE GENOMIC DNA]</scope>
    <source>
        <strain>ATCC 8585 / CBS 2359 / DSM 70799 / NBRC 1267 / NRRL Y-1140 / WM37</strain>
    </source>
</reference>
<name>CG121_KLULA</name>
<accession>Q6CT72</accession>
<evidence type="ECO:0000250" key="1"/>
<evidence type="ECO:0000305" key="2"/>